<reference key="1">
    <citation type="journal article" date="2002" name="Nature">
        <title>The genome sequence of Schizosaccharomyces pombe.</title>
        <authorList>
            <person name="Wood V."/>
            <person name="Gwilliam R."/>
            <person name="Rajandream M.A."/>
            <person name="Lyne M.H."/>
            <person name="Lyne R."/>
            <person name="Stewart A."/>
            <person name="Sgouros J.G."/>
            <person name="Peat N."/>
            <person name="Hayles J."/>
            <person name="Baker S.G."/>
            <person name="Basham D."/>
            <person name="Bowman S."/>
            <person name="Brooks K."/>
            <person name="Brown D."/>
            <person name="Brown S."/>
            <person name="Chillingworth T."/>
            <person name="Churcher C.M."/>
            <person name="Collins M."/>
            <person name="Connor R."/>
            <person name="Cronin A."/>
            <person name="Davis P."/>
            <person name="Feltwell T."/>
            <person name="Fraser A."/>
            <person name="Gentles S."/>
            <person name="Goble A."/>
            <person name="Hamlin N."/>
            <person name="Harris D.E."/>
            <person name="Hidalgo J."/>
            <person name="Hodgson G."/>
            <person name="Holroyd S."/>
            <person name="Hornsby T."/>
            <person name="Howarth S."/>
            <person name="Huckle E.J."/>
            <person name="Hunt S."/>
            <person name="Jagels K."/>
            <person name="James K.D."/>
            <person name="Jones L."/>
            <person name="Jones M."/>
            <person name="Leather S."/>
            <person name="McDonald S."/>
            <person name="McLean J."/>
            <person name="Mooney P."/>
            <person name="Moule S."/>
            <person name="Mungall K.L."/>
            <person name="Murphy L.D."/>
            <person name="Niblett D."/>
            <person name="Odell C."/>
            <person name="Oliver K."/>
            <person name="O'Neil S."/>
            <person name="Pearson D."/>
            <person name="Quail M.A."/>
            <person name="Rabbinowitsch E."/>
            <person name="Rutherford K.M."/>
            <person name="Rutter S."/>
            <person name="Saunders D."/>
            <person name="Seeger K."/>
            <person name="Sharp S."/>
            <person name="Skelton J."/>
            <person name="Simmonds M.N."/>
            <person name="Squares R."/>
            <person name="Squares S."/>
            <person name="Stevens K."/>
            <person name="Taylor K."/>
            <person name="Taylor R.G."/>
            <person name="Tivey A."/>
            <person name="Walsh S.V."/>
            <person name="Warren T."/>
            <person name="Whitehead S."/>
            <person name="Woodward J.R."/>
            <person name="Volckaert G."/>
            <person name="Aert R."/>
            <person name="Robben J."/>
            <person name="Grymonprez B."/>
            <person name="Weltjens I."/>
            <person name="Vanstreels E."/>
            <person name="Rieger M."/>
            <person name="Schaefer M."/>
            <person name="Mueller-Auer S."/>
            <person name="Gabel C."/>
            <person name="Fuchs M."/>
            <person name="Duesterhoeft A."/>
            <person name="Fritzc C."/>
            <person name="Holzer E."/>
            <person name="Moestl D."/>
            <person name="Hilbert H."/>
            <person name="Borzym K."/>
            <person name="Langer I."/>
            <person name="Beck A."/>
            <person name="Lehrach H."/>
            <person name="Reinhardt R."/>
            <person name="Pohl T.M."/>
            <person name="Eger P."/>
            <person name="Zimmermann W."/>
            <person name="Wedler H."/>
            <person name="Wambutt R."/>
            <person name="Purnelle B."/>
            <person name="Goffeau A."/>
            <person name="Cadieu E."/>
            <person name="Dreano S."/>
            <person name="Gloux S."/>
            <person name="Lelaure V."/>
            <person name="Mottier S."/>
            <person name="Galibert F."/>
            <person name="Aves S.J."/>
            <person name="Xiang Z."/>
            <person name="Hunt C."/>
            <person name="Moore K."/>
            <person name="Hurst S.M."/>
            <person name="Lucas M."/>
            <person name="Rochet M."/>
            <person name="Gaillardin C."/>
            <person name="Tallada V.A."/>
            <person name="Garzon A."/>
            <person name="Thode G."/>
            <person name="Daga R.R."/>
            <person name="Cruzado L."/>
            <person name="Jimenez J."/>
            <person name="Sanchez M."/>
            <person name="del Rey F."/>
            <person name="Benito J."/>
            <person name="Dominguez A."/>
            <person name="Revuelta J.L."/>
            <person name="Moreno S."/>
            <person name="Armstrong J."/>
            <person name="Forsburg S.L."/>
            <person name="Cerutti L."/>
            <person name="Lowe T."/>
            <person name="McCombie W.R."/>
            <person name="Paulsen I."/>
            <person name="Potashkin J."/>
            <person name="Shpakovski G.V."/>
            <person name="Ussery D."/>
            <person name="Barrell B.G."/>
            <person name="Nurse P."/>
        </authorList>
    </citation>
    <scope>NUCLEOTIDE SEQUENCE [LARGE SCALE GENOMIC DNA]</scope>
    <source>
        <strain>972 / ATCC 24843</strain>
    </source>
</reference>
<reference key="2">
    <citation type="journal article" date="2006" name="Nat. Biotechnol.">
        <title>ORFeome cloning and global analysis of protein localization in the fission yeast Schizosaccharomyces pombe.</title>
        <authorList>
            <person name="Matsuyama A."/>
            <person name="Arai R."/>
            <person name="Yashiroda Y."/>
            <person name="Shirai A."/>
            <person name="Kamata A."/>
            <person name="Sekido S."/>
            <person name="Kobayashi Y."/>
            <person name="Hashimoto A."/>
            <person name="Hamamoto M."/>
            <person name="Hiraoka Y."/>
            <person name="Horinouchi S."/>
            <person name="Yoshida M."/>
        </authorList>
    </citation>
    <scope>SUBCELLULAR LOCATION [LARGE SCALE ANALYSIS]</scope>
</reference>
<protein>
    <recommendedName>
        <fullName evidence="2">Protein N-terminal and lysine N-methyltransferase efm7</fullName>
        <ecNumber evidence="2">2.1.1.-</ecNumber>
    </recommendedName>
    <alternativeName>
        <fullName evidence="2">Elongation factor methyltransferase 7</fullName>
    </alternativeName>
</protein>
<accession>Q9UT28</accession>
<proteinExistence type="inferred from homology"/>
<organism>
    <name type="scientific">Schizosaccharomyces pombe (strain 972 / ATCC 24843)</name>
    <name type="common">Fission yeast</name>
    <dbReference type="NCBI Taxonomy" id="284812"/>
    <lineage>
        <taxon>Eukaryota</taxon>
        <taxon>Fungi</taxon>
        <taxon>Dikarya</taxon>
        <taxon>Ascomycota</taxon>
        <taxon>Taphrinomycotina</taxon>
        <taxon>Schizosaccharomycetes</taxon>
        <taxon>Schizosaccharomycetales</taxon>
        <taxon>Schizosaccharomycetaceae</taxon>
        <taxon>Schizosaccharomyces</taxon>
    </lineage>
</organism>
<sequence length="255" mass="28490">MADNDFEGFGIFEEPEGFRPSTPPPKEVLHTRVIVPNGPEEIKLRLVGSHSLWAHYLWNSGIELANYIDKNPDTVRAKKVLELGAGAGLPSIVSAFDGAKFVVSTDYPDPALIDNLEHNVKQYAEIASKISAVGYLWGSNIKEVMSNAGFKDNEVFDILLLSDLVFNHTEHSKLIKSCKMAIEGNPNAVVYVFFTHHRPHLAKKDMIFFDIAQSEGFQIEKILEEKRTPMFEEDPGAPEIRATVHGYKMTIPIPV</sequence>
<evidence type="ECO:0000250" key="1">
    <source>
        <dbReference type="UniProtKB" id="Q05874"/>
    </source>
</evidence>
<evidence type="ECO:0000255" key="2">
    <source>
        <dbReference type="HAMAP-Rule" id="MF_03223"/>
    </source>
</evidence>
<evidence type="ECO:0000256" key="3">
    <source>
        <dbReference type="SAM" id="MobiDB-lite"/>
    </source>
</evidence>
<evidence type="ECO:0000312" key="4">
    <source>
        <dbReference type="PomBase" id="SPAC8F11.09c"/>
    </source>
</evidence>
<name>EFM7_SCHPO</name>
<gene>
    <name evidence="1" type="primary">nnt1</name>
    <name evidence="2" type="synonym">efm7</name>
    <name evidence="4" type="ORF">SPAC8F11.09c</name>
</gene>
<keyword id="KW-0963">Cytoplasm</keyword>
<keyword id="KW-0489">Methyltransferase</keyword>
<keyword id="KW-1185">Reference proteome</keyword>
<keyword id="KW-0949">S-adenosyl-L-methionine</keyword>
<keyword id="KW-0808">Transferase</keyword>
<dbReference type="EC" id="2.1.1.-" evidence="2"/>
<dbReference type="EMBL" id="CU329670">
    <property type="protein sequence ID" value="CAB52170.1"/>
    <property type="molecule type" value="Genomic_DNA"/>
</dbReference>
<dbReference type="PIR" id="T39184">
    <property type="entry name" value="T39184"/>
</dbReference>
<dbReference type="RefSeq" id="NP_593958.1">
    <property type="nucleotide sequence ID" value="NM_001019385.2"/>
</dbReference>
<dbReference type="SMR" id="Q9UT28"/>
<dbReference type="FunCoup" id="Q9UT28">
    <property type="interactions" value="144"/>
</dbReference>
<dbReference type="STRING" id="284812.Q9UT28"/>
<dbReference type="iPTMnet" id="Q9UT28"/>
<dbReference type="PaxDb" id="4896-SPAC8F11.09c.1"/>
<dbReference type="EnsemblFungi" id="SPAC8F11.09c.1">
    <property type="protein sequence ID" value="SPAC8F11.09c.1:pep"/>
    <property type="gene ID" value="SPAC8F11.09c"/>
</dbReference>
<dbReference type="GeneID" id="2543599"/>
<dbReference type="KEGG" id="spo:2543599"/>
<dbReference type="PomBase" id="SPAC8F11.09c">
    <property type="gene designation" value="nnt1"/>
</dbReference>
<dbReference type="VEuPathDB" id="FungiDB:SPAC8F11.09c"/>
<dbReference type="eggNOG" id="KOG2920">
    <property type="taxonomic scope" value="Eukaryota"/>
</dbReference>
<dbReference type="HOGENOM" id="CLU_032409_0_0_1"/>
<dbReference type="InParanoid" id="Q9UT28"/>
<dbReference type="OMA" id="VGHNPLW"/>
<dbReference type="PhylomeDB" id="Q9UT28"/>
<dbReference type="PRO" id="PR:Q9UT28"/>
<dbReference type="Proteomes" id="UP000002485">
    <property type="component" value="Chromosome I"/>
</dbReference>
<dbReference type="GO" id="GO:0005829">
    <property type="term" value="C:cytosol"/>
    <property type="evidence" value="ECO:0007005"/>
    <property type="project" value="PomBase"/>
</dbReference>
<dbReference type="GO" id="GO:0071885">
    <property type="term" value="F:N-terminal protein N-methyltransferase activity"/>
    <property type="evidence" value="ECO:0007669"/>
    <property type="project" value="UniProtKB-UniRule"/>
</dbReference>
<dbReference type="GO" id="GO:0008112">
    <property type="term" value="F:nicotinamide N-methyltransferase activity"/>
    <property type="evidence" value="ECO:0000266"/>
    <property type="project" value="PomBase"/>
</dbReference>
<dbReference type="GO" id="GO:0008276">
    <property type="term" value="F:protein methyltransferase activity"/>
    <property type="evidence" value="ECO:0000318"/>
    <property type="project" value="GO_Central"/>
</dbReference>
<dbReference type="GO" id="GO:0016279">
    <property type="term" value="F:protein-lysine N-methyltransferase activity"/>
    <property type="evidence" value="ECO:0007669"/>
    <property type="project" value="UniProtKB-UniRule"/>
</dbReference>
<dbReference type="GO" id="GO:0032259">
    <property type="term" value="P:methylation"/>
    <property type="evidence" value="ECO:0007669"/>
    <property type="project" value="UniProtKB-KW"/>
</dbReference>
<dbReference type="GO" id="GO:0006769">
    <property type="term" value="P:nicotinamide metabolic process"/>
    <property type="evidence" value="ECO:0000266"/>
    <property type="project" value="PomBase"/>
</dbReference>
<dbReference type="Gene3D" id="3.40.50.150">
    <property type="entry name" value="Vaccinia Virus protein VP39"/>
    <property type="match status" value="1"/>
</dbReference>
<dbReference type="HAMAP" id="MF_03223">
    <property type="entry name" value="Methyltr_EFM7"/>
    <property type="match status" value="1"/>
</dbReference>
<dbReference type="InterPro" id="IPR025784">
    <property type="entry name" value="EFM7"/>
</dbReference>
<dbReference type="InterPro" id="IPR019410">
    <property type="entry name" value="Methyltransf_16"/>
</dbReference>
<dbReference type="InterPro" id="IPR029063">
    <property type="entry name" value="SAM-dependent_MTases_sf"/>
</dbReference>
<dbReference type="PANTHER" id="PTHR14614">
    <property type="entry name" value="HEPATOCELLULAR CARCINOMA-ASSOCIATED ANTIGEN"/>
    <property type="match status" value="1"/>
</dbReference>
<dbReference type="PANTHER" id="PTHR14614:SF10">
    <property type="entry name" value="PROTEIN N-TERMINAL AND LYSINE N-METHYLTRANSFERASE EFM7"/>
    <property type="match status" value="1"/>
</dbReference>
<dbReference type="Pfam" id="PF10294">
    <property type="entry name" value="Methyltransf_16"/>
    <property type="match status" value="1"/>
</dbReference>
<dbReference type="SUPFAM" id="SSF53335">
    <property type="entry name" value="S-adenosyl-L-methionine-dependent methyltransferases"/>
    <property type="match status" value="1"/>
</dbReference>
<dbReference type="PROSITE" id="PS51560">
    <property type="entry name" value="SAM_MT_NNT1"/>
    <property type="match status" value="1"/>
</dbReference>
<comment type="function">
    <text evidence="2">S-adenosyl-L-methionine-dependent protein methyltransferase that trimethylates the N-terminal glycine 'Gly-2' of elongation factor 1-alpha, before also catalyzing the mono- and dimethylation of 'Lys-3'.</text>
</comment>
<comment type="subcellular location">
    <subcellularLocation>
        <location evidence="2">Cytoplasm</location>
    </subcellularLocation>
</comment>
<comment type="similarity">
    <text evidence="2">Belongs to the class I-like SAM-binding methyltransferase superfamily. EFM7 family.</text>
</comment>
<feature type="chain" id="PRO_0000096899" description="Protein N-terminal and lysine N-methyltransferase efm7">
    <location>
        <begin position="1"/>
        <end position="255"/>
    </location>
</feature>
<feature type="region of interest" description="Disordered" evidence="3">
    <location>
        <begin position="1"/>
        <end position="25"/>
    </location>
</feature>
<feature type="binding site" evidence="2">
    <location>
        <position position="58"/>
    </location>
    <ligand>
        <name>S-adenosyl-L-methionine</name>
        <dbReference type="ChEBI" id="CHEBI:59789"/>
    </ligand>
</feature>
<feature type="binding site" evidence="2">
    <location>
        <begin position="84"/>
        <end position="86"/>
    </location>
    <ligand>
        <name>S-adenosyl-L-methionine</name>
        <dbReference type="ChEBI" id="CHEBI:59789"/>
    </ligand>
</feature>
<feature type="binding site" evidence="2">
    <location>
        <position position="106"/>
    </location>
    <ligand>
        <name>S-adenosyl-L-methionine</name>
        <dbReference type="ChEBI" id="CHEBI:59789"/>
    </ligand>
</feature>
<feature type="binding site" evidence="2">
    <location>
        <position position="137"/>
    </location>
    <ligand>
        <name>S-adenosyl-L-methionine</name>
        <dbReference type="ChEBI" id="CHEBI:59789"/>
    </ligand>
</feature>
<feature type="binding site" evidence="2">
    <location>
        <position position="162"/>
    </location>
    <ligand>
        <name>S-adenosyl-L-methionine</name>
        <dbReference type="ChEBI" id="CHEBI:59789"/>
    </ligand>
</feature>